<comment type="function">
    <text evidence="5">Catalyzes the phosphorylation of thymidine monophosphate (dTMP) to thymidine diphosphate (dTDP), the immediate precursor for the DNA building block dTTP, with ATP as the preferred phosphoryl donor in the presence of Mg(2+).</text>
</comment>
<comment type="catalytic activity">
    <reaction evidence="5">
        <text>dTMP + ATP = dTDP + ADP</text>
        <dbReference type="Rhea" id="RHEA:13517"/>
        <dbReference type="ChEBI" id="CHEBI:30616"/>
        <dbReference type="ChEBI" id="CHEBI:58369"/>
        <dbReference type="ChEBI" id="CHEBI:63528"/>
        <dbReference type="ChEBI" id="CHEBI:456216"/>
        <dbReference type="EC" id="2.7.4.9"/>
    </reaction>
</comment>
<comment type="cofactor">
    <cofactor evidence="1">
        <name>Mg(2+)</name>
        <dbReference type="ChEBI" id="CHEBI:18420"/>
    </cofactor>
</comment>
<comment type="pathway">
    <text evidence="5">Pyrimidine metabolism; dTTP biosynthesis.</text>
</comment>
<comment type="subunit">
    <text evidence="1">Homodimer.</text>
</comment>
<comment type="alternative products">
    <event type="alternative splicing"/>
    <isoform>
        <id>P97930-1</id>
        <name>1</name>
        <name>Long</name>
        <sequence type="displayed"/>
    </isoform>
    <isoform>
        <id>P97930-2</id>
        <name>2</name>
        <name>Short</name>
        <sequence type="described" ref="VSP_003029"/>
    </isoform>
</comment>
<comment type="developmental stage">
    <text evidence="2">Very low mRNA levels in the quiescent cells. As cells exit from G0 to G1 phase, the expression levels gradually increase.</text>
</comment>
<comment type="similarity">
    <text evidence="4">Belongs to the thymidylate kinase family.</text>
</comment>
<evidence type="ECO:0000250" key="1">
    <source>
        <dbReference type="UniProtKB" id="P23919"/>
    </source>
</evidence>
<evidence type="ECO:0000269" key="2">
    <source>
    </source>
</evidence>
<evidence type="ECO:0000303" key="3">
    <source>
    </source>
</evidence>
<evidence type="ECO:0000305" key="4"/>
<evidence type="ECO:0000305" key="5">
    <source>
    </source>
</evidence>
<dbReference type="EC" id="2.7.4.9" evidence="5"/>
<dbReference type="EMBL" id="S82852">
    <property type="protein sequence ID" value="AAB46837.1"/>
    <property type="molecule type" value="mRNA"/>
</dbReference>
<dbReference type="EMBL" id="S82853">
    <property type="protein sequence ID" value="AAB46838.1"/>
    <property type="molecule type" value="mRNA"/>
</dbReference>
<dbReference type="EMBL" id="AK088416">
    <property type="protein sequence ID" value="BAC40343.1"/>
    <property type="molecule type" value="mRNA"/>
</dbReference>
<dbReference type="EMBL" id="BC030178">
    <property type="protein sequence ID" value="AAH30178.1"/>
    <property type="molecule type" value="mRNA"/>
</dbReference>
<dbReference type="CCDS" id="CCDS35672.1">
    <molecule id="P97930-2"/>
</dbReference>
<dbReference type="CCDS" id="CCDS48329.1">
    <molecule id="P97930-1"/>
</dbReference>
<dbReference type="RefSeq" id="NP_001099137.1">
    <molecule id="P97930-1"/>
    <property type="nucleotide sequence ID" value="NM_001105667.1"/>
</dbReference>
<dbReference type="RefSeq" id="NP_075625.1">
    <molecule id="P97930-2"/>
    <property type="nucleotide sequence ID" value="NM_023136.2"/>
</dbReference>
<dbReference type="SMR" id="P97930"/>
<dbReference type="BioGRID" id="204232">
    <property type="interactions" value="3"/>
</dbReference>
<dbReference type="FunCoup" id="P97930">
    <property type="interactions" value="3246"/>
</dbReference>
<dbReference type="STRING" id="10090.ENSMUSP00000027503"/>
<dbReference type="iPTMnet" id="P97930"/>
<dbReference type="PhosphoSitePlus" id="P97930"/>
<dbReference type="SwissPalm" id="P97930"/>
<dbReference type="PaxDb" id="10090-ENSMUSP00000027503"/>
<dbReference type="PeptideAtlas" id="P97930"/>
<dbReference type="ProteomicsDB" id="289992">
    <molecule id="P97930-1"/>
</dbReference>
<dbReference type="ProteomicsDB" id="289993">
    <molecule id="P97930-2"/>
</dbReference>
<dbReference type="Pumba" id="P97930"/>
<dbReference type="Antibodypedia" id="34572">
    <property type="antibodies" value="484 antibodies from 30 providers"/>
</dbReference>
<dbReference type="DNASU" id="21915"/>
<dbReference type="Ensembl" id="ENSMUST00000027503.14">
    <molecule id="P97930-1"/>
    <property type="protein sequence ID" value="ENSMUSP00000027503.8"/>
    <property type="gene ID" value="ENSMUSG00000026281.16"/>
</dbReference>
<dbReference type="Ensembl" id="ENSMUST00000112890.3">
    <molecule id="P97930-2"/>
    <property type="protein sequence ID" value="ENSMUSP00000108511.3"/>
    <property type="gene ID" value="ENSMUSG00000026281.16"/>
</dbReference>
<dbReference type="GeneID" id="21915"/>
<dbReference type="KEGG" id="mmu:21915"/>
<dbReference type="UCSC" id="uc007cek.2">
    <molecule id="P97930-1"/>
    <property type="organism name" value="mouse"/>
</dbReference>
<dbReference type="AGR" id="MGI:108396"/>
<dbReference type="CTD" id="1841"/>
<dbReference type="MGI" id="MGI:108396">
    <property type="gene designation" value="Dtymk"/>
</dbReference>
<dbReference type="VEuPathDB" id="HostDB:ENSMUSG00000026281"/>
<dbReference type="eggNOG" id="KOG3327">
    <property type="taxonomic scope" value="Eukaryota"/>
</dbReference>
<dbReference type="GeneTree" id="ENSGT00940000154030"/>
<dbReference type="HOGENOM" id="CLU_049131_3_3_1"/>
<dbReference type="InParanoid" id="P97930"/>
<dbReference type="OMA" id="YWHQFDA"/>
<dbReference type="OrthoDB" id="425602at2759"/>
<dbReference type="PhylomeDB" id="P97930"/>
<dbReference type="TreeFam" id="TF324638"/>
<dbReference type="Reactome" id="R-MMU-499943">
    <property type="pathway name" value="Interconversion of nucleotide di- and triphosphates"/>
</dbReference>
<dbReference type="SABIO-RK" id="P97930"/>
<dbReference type="UniPathway" id="UPA00575"/>
<dbReference type="BioGRID-ORCS" id="21915">
    <property type="hits" value="29 hits in 78 CRISPR screens"/>
</dbReference>
<dbReference type="ChiTaRS" id="Dtymk">
    <property type="organism name" value="mouse"/>
</dbReference>
<dbReference type="PRO" id="PR:P97930"/>
<dbReference type="Proteomes" id="UP000000589">
    <property type="component" value="Chromosome 1"/>
</dbReference>
<dbReference type="RNAct" id="P97930">
    <property type="molecule type" value="protein"/>
</dbReference>
<dbReference type="Bgee" id="ENSMUSG00000026281">
    <property type="expression patterns" value="Expressed in urogenital fold and 278 other cell types or tissues"/>
</dbReference>
<dbReference type="ExpressionAtlas" id="P97930">
    <property type="expression patterns" value="baseline and differential"/>
</dbReference>
<dbReference type="GO" id="GO:0005524">
    <property type="term" value="F:ATP binding"/>
    <property type="evidence" value="ECO:0007669"/>
    <property type="project" value="UniProtKB-KW"/>
</dbReference>
<dbReference type="GO" id="GO:0004798">
    <property type="term" value="F:dTMP kinase activity"/>
    <property type="evidence" value="ECO:0000314"/>
    <property type="project" value="MGI"/>
</dbReference>
<dbReference type="GO" id="GO:0071363">
    <property type="term" value="P:cellular response to growth factor stimulus"/>
    <property type="evidence" value="ECO:0000314"/>
    <property type="project" value="MGI"/>
</dbReference>
<dbReference type="GO" id="GO:0006233">
    <property type="term" value="P:dTDP biosynthetic process"/>
    <property type="evidence" value="ECO:0000314"/>
    <property type="project" value="MGI"/>
</dbReference>
<dbReference type="GO" id="GO:0006235">
    <property type="term" value="P:dTTP biosynthetic process"/>
    <property type="evidence" value="ECO:0007669"/>
    <property type="project" value="UniProtKB-UniPathway"/>
</dbReference>
<dbReference type="GO" id="GO:0009165">
    <property type="term" value="P:nucleotide biosynthetic process"/>
    <property type="evidence" value="ECO:0000314"/>
    <property type="project" value="MGI"/>
</dbReference>
<dbReference type="GO" id="GO:0046105">
    <property type="term" value="P:thymidine biosynthetic process"/>
    <property type="evidence" value="ECO:0007669"/>
    <property type="project" value="Ensembl"/>
</dbReference>
<dbReference type="CDD" id="cd01672">
    <property type="entry name" value="TMPK"/>
    <property type="match status" value="1"/>
</dbReference>
<dbReference type="FunFam" id="3.40.50.300:FF:000679">
    <property type="entry name" value="Thymidylate kinase"/>
    <property type="match status" value="1"/>
</dbReference>
<dbReference type="Gene3D" id="3.40.50.300">
    <property type="entry name" value="P-loop containing nucleotide triphosphate hydrolases"/>
    <property type="match status" value="1"/>
</dbReference>
<dbReference type="HAMAP" id="MF_00165">
    <property type="entry name" value="Thymidylate_kinase"/>
    <property type="match status" value="1"/>
</dbReference>
<dbReference type="InterPro" id="IPR027417">
    <property type="entry name" value="P-loop_NTPase"/>
</dbReference>
<dbReference type="InterPro" id="IPR039430">
    <property type="entry name" value="Thymidylate_kin-like_dom"/>
</dbReference>
<dbReference type="InterPro" id="IPR018095">
    <property type="entry name" value="Thymidylate_kin_CS"/>
</dbReference>
<dbReference type="InterPro" id="IPR018094">
    <property type="entry name" value="Thymidylate_kinase"/>
</dbReference>
<dbReference type="NCBIfam" id="TIGR00041">
    <property type="entry name" value="DTMP_kinase"/>
    <property type="match status" value="1"/>
</dbReference>
<dbReference type="PANTHER" id="PTHR10344">
    <property type="entry name" value="THYMIDYLATE KINASE"/>
    <property type="match status" value="1"/>
</dbReference>
<dbReference type="PANTHER" id="PTHR10344:SF1">
    <property type="entry name" value="THYMIDYLATE KINASE"/>
    <property type="match status" value="1"/>
</dbReference>
<dbReference type="Pfam" id="PF02223">
    <property type="entry name" value="Thymidylate_kin"/>
    <property type="match status" value="1"/>
</dbReference>
<dbReference type="SUPFAM" id="SSF52540">
    <property type="entry name" value="P-loop containing nucleoside triphosphate hydrolases"/>
    <property type="match status" value="1"/>
</dbReference>
<dbReference type="PROSITE" id="PS01331">
    <property type="entry name" value="THYMIDYLATE_KINASE"/>
    <property type="match status" value="1"/>
</dbReference>
<sequence>MASRRGALIVLEGVDRAGKTTQGLKLVTALCASGHRAELLRFPERSTEIGKLLNSYLEKKTELEDHSVHLLFSANRWEQVPLIKAKLNQGVTLVLDRYAFSGVAFTGAKENFSLDWCKQPDVGLPKPDLILFLQLQLLDAAARGEFGLERYETGTFQKQVLLCFQQLMEEKNLNWKVVDASKSIEEVHKEIRAHSEDAIRNAAQRPLGELWK</sequence>
<protein>
    <recommendedName>
        <fullName>Thymidylate kinase</fullName>
        <ecNumber evidence="5">2.7.4.9</ecNumber>
    </recommendedName>
    <alternativeName>
        <fullName>dTMP kinase</fullName>
    </alternativeName>
</protein>
<name>KTHY_MOUSE</name>
<gene>
    <name type="primary">Dtymk</name>
    <name type="synonym">Tmk</name>
</gene>
<proteinExistence type="evidence at protein level"/>
<feature type="initiator methionine" description="Removed" evidence="1">
    <location>
        <position position="1"/>
    </location>
</feature>
<feature type="chain" id="PRO_0000155211" description="Thymidylate kinase">
    <location>
        <begin position="2"/>
        <end position="212"/>
    </location>
</feature>
<feature type="region of interest" description="LID" evidence="1">
    <location>
        <begin position="133"/>
        <end position="157"/>
    </location>
</feature>
<feature type="binding site" evidence="1">
    <location>
        <begin position="16"/>
        <end position="21"/>
    </location>
    <ligand>
        <name>ATP</name>
        <dbReference type="ChEBI" id="CHEBI:30616"/>
    </ligand>
</feature>
<feature type="binding site" evidence="1">
    <location>
        <position position="97"/>
    </location>
    <ligand>
        <name>ATP</name>
        <dbReference type="ChEBI" id="CHEBI:30616"/>
    </ligand>
</feature>
<feature type="binding site" evidence="1">
    <location>
        <position position="182"/>
    </location>
    <ligand>
        <name>ATP</name>
        <dbReference type="ChEBI" id="CHEBI:30616"/>
    </ligand>
</feature>
<feature type="binding site" evidence="1">
    <location>
        <position position="192"/>
    </location>
    <ligand>
        <name>ATP</name>
        <dbReference type="ChEBI" id="CHEBI:30616"/>
    </ligand>
</feature>
<feature type="modified residue" description="N-acetylalanine" evidence="1">
    <location>
        <position position="2"/>
    </location>
</feature>
<feature type="splice variant" id="VSP_003029" description="In isoform 2." evidence="3">
    <location>
        <begin position="81"/>
        <end position="212"/>
    </location>
</feature>
<feature type="sequence conflict" description="In Ref. 2; BAC40343." evidence="4" ref="2">
    <original>Y</original>
    <variation>N</variation>
    <location>
        <position position="151"/>
    </location>
</feature>
<feature type="sequence conflict" description="In Ref. 1; AAB46838." evidence="4" ref="1">
    <original>SIEEVHKEIRAHSEDAIRNAAQRPLGELWK</original>
    <variation>RTPSETLHRGHWGSYGNKSASIANTIFWFCKRLVEGSHLYTISRS</variation>
    <location>
        <begin position="183"/>
        <end position="212"/>
    </location>
</feature>
<keyword id="KW-0007">Acetylation</keyword>
<keyword id="KW-0025">Alternative splicing</keyword>
<keyword id="KW-0067">ATP-binding</keyword>
<keyword id="KW-0418">Kinase</keyword>
<keyword id="KW-0545">Nucleotide biosynthesis</keyword>
<keyword id="KW-0547">Nucleotide-binding</keyword>
<keyword id="KW-1185">Reference proteome</keyword>
<keyword id="KW-0808">Transferase</keyword>
<organism>
    <name type="scientific">Mus musculus</name>
    <name type="common">Mouse</name>
    <dbReference type="NCBI Taxonomy" id="10090"/>
    <lineage>
        <taxon>Eukaryota</taxon>
        <taxon>Metazoa</taxon>
        <taxon>Chordata</taxon>
        <taxon>Craniata</taxon>
        <taxon>Vertebrata</taxon>
        <taxon>Euteleostomi</taxon>
        <taxon>Mammalia</taxon>
        <taxon>Eutheria</taxon>
        <taxon>Euarchontoglires</taxon>
        <taxon>Glires</taxon>
        <taxon>Rodentia</taxon>
        <taxon>Myomorpha</taxon>
        <taxon>Muroidea</taxon>
        <taxon>Muridae</taxon>
        <taxon>Murinae</taxon>
        <taxon>Mus</taxon>
        <taxon>Mus</taxon>
    </lineage>
</organism>
<accession>P97930</accession>
<accession>Q8C2L0</accession>
<accession>Q8K2S2</accession>
<reference key="1">
    <citation type="journal article" date="1995" name="Cell Growth Differ.">
        <title>Molecular characterization of the murine thymidylate kinase gene.</title>
        <authorList>
            <person name="Liang P."/>
            <person name="Averboukh L."/>
            <person name="Zhu W."/>
            <person name="Haley T."/>
            <person name="Pardee A.B."/>
        </authorList>
    </citation>
    <scope>NUCLEOTIDE SEQUENCE [MRNA] (ISOFORMS 1 AND 2)</scope>
    <scope>FUNCTION</scope>
    <scope>CATALYTIC ACTIVITY</scope>
    <scope>PATHWAY</scope>
    <source>
        <strain>BALB/cJ</strain>
    </source>
</reference>
<reference key="2">
    <citation type="journal article" date="2005" name="Science">
        <title>The transcriptional landscape of the mammalian genome.</title>
        <authorList>
            <person name="Carninci P."/>
            <person name="Kasukawa T."/>
            <person name="Katayama S."/>
            <person name="Gough J."/>
            <person name="Frith M.C."/>
            <person name="Maeda N."/>
            <person name="Oyama R."/>
            <person name="Ravasi T."/>
            <person name="Lenhard B."/>
            <person name="Wells C."/>
            <person name="Kodzius R."/>
            <person name="Shimokawa K."/>
            <person name="Bajic V.B."/>
            <person name="Brenner S.E."/>
            <person name="Batalov S."/>
            <person name="Forrest A.R."/>
            <person name="Zavolan M."/>
            <person name="Davis M.J."/>
            <person name="Wilming L.G."/>
            <person name="Aidinis V."/>
            <person name="Allen J.E."/>
            <person name="Ambesi-Impiombato A."/>
            <person name="Apweiler R."/>
            <person name="Aturaliya R.N."/>
            <person name="Bailey T.L."/>
            <person name="Bansal M."/>
            <person name="Baxter L."/>
            <person name="Beisel K.W."/>
            <person name="Bersano T."/>
            <person name="Bono H."/>
            <person name="Chalk A.M."/>
            <person name="Chiu K.P."/>
            <person name="Choudhary V."/>
            <person name="Christoffels A."/>
            <person name="Clutterbuck D.R."/>
            <person name="Crowe M.L."/>
            <person name="Dalla E."/>
            <person name="Dalrymple B.P."/>
            <person name="de Bono B."/>
            <person name="Della Gatta G."/>
            <person name="di Bernardo D."/>
            <person name="Down T."/>
            <person name="Engstrom P."/>
            <person name="Fagiolini M."/>
            <person name="Faulkner G."/>
            <person name="Fletcher C.F."/>
            <person name="Fukushima T."/>
            <person name="Furuno M."/>
            <person name="Futaki S."/>
            <person name="Gariboldi M."/>
            <person name="Georgii-Hemming P."/>
            <person name="Gingeras T.R."/>
            <person name="Gojobori T."/>
            <person name="Green R.E."/>
            <person name="Gustincich S."/>
            <person name="Harbers M."/>
            <person name="Hayashi Y."/>
            <person name="Hensch T.K."/>
            <person name="Hirokawa N."/>
            <person name="Hill D."/>
            <person name="Huminiecki L."/>
            <person name="Iacono M."/>
            <person name="Ikeo K."/>
            <person name="Iwama A."/>
            <person name="Ishikawa T."/>
            <person name="Jakt M."/>
            <person name="Kanapin A."/>
            <person name="Katoh M."/>
            <person name="Kawasawa Y."/>
            <person name="Kelso J."/>
            <person name="Kitamura H."/>
            <person name="Kitano H."/>
            <person name="Kollias G."/>
            <person name="Krishnan S.P."/>
            <person name="Kruger A."/>
            <person name="Kummerfeld S.K."/>
            <person name="Kurochkin I.V."/>
            <person name="Lareau L.F."/>
            <person name="Lazarevic D."/>
            <person name="Lipovich L."/>
            <person name="Liu J."/>
            <person name="Liuni S."/>
            <person name="McWilliam S."/>
            <person name="Madan Babu M."/>
            <person name="Madera M."/>
            <person name="Marchionni L."/>
            <person name="Matsuda H."/>
            <person name="Matsuzawa S."/>
            <person name="Miki H."/>
            <person name="Mignone F."/>
            <person name="Miyake S."/>
            <person name="Morris K."/>
            <person name="Mottagui-Tabar S."/>
            <person name="Mulder N."/>
            <person name="Nakano N."/>
            <person name="Nakauchi H."/>
            <person name="Ng P."/>
            <person name="Nilsson R."/>
            <person name="Nishiguchi S."/>
            <person name="Nishikawa S."/>
            <person name="Nori F."/>
            <person name="Ohara O."/>
            <person name="Okazaki Y."/>
            <person name="Orlando V."/>
            <person name="Pang K.C."/>
            <person name="Pavan W.J."/>
            <person name="Pavesi G."/>
            <person name="Pesole G."/>
            <person name="Petrovsky N."/>
            <person name="Piazza S."/>
            <person name="Reed J."/>
            <person name="Reid J.F."/>
            <person name="Ring B.Z."/>
            <person name="Ringwald M."/>
            <person name="Rost B."/>
            <person name="Ruan Y."/>
            <person name="Salzberg S.L."/>
            <person name="Sandelin A."/>
            <person name="Schneider C."/>
            <person name="Schoenbach C."/>
            <person name="Sekiguchi K."/>
            <person name="Semple C.A."/>
            <person name="Seno S."/>
            <person name="Sessa L."/>
            <person name="Sheng Y."/>
            <person name="Shibata Y."/>
            <person name="Shimada H."/>
            <person name="Shimada K."/>
            <person name="Silva D."/>
            <person name="Sinclair B."/>
            <person name="Sperling S."/>
            <person name="Stupka E."/>
            <person name="Sugiura K."/>
            <person name="Sultana R."/>
            <person name="Takenaka Y."/>
            <person name="Taki K."/>
            <person name="Tammoja K."/>
            <person name="Tan S.L."/>
            <person name="Tang S."/>
            <person name="Taylor M.S."/>
            <person name="Tegner J."/>
            <person name="Teichmann S.A."/>
            <person name="Ueda H.R."/>
            <person name="van Nimwegen E."/>
            <person name="Verardo R."/>
            <person name="Wei C.L."/>
            <person name="Yagi K."/>
            <person name="Yamanishi H."/>
            <person name="Zabarovsky E."/>
            <person name="Zhu S."/>
            <person name="Zimmer A."/>
            <person name="Hide W."/>
            <person name="Bult C."/>
            <person name="Grimmond S.M."/>
            <person name="Teasdale R.D."/>
            <person name="Liu E.T."/>
            <person name="Brusic V."/>
            <person name="Quackenbush J."/>
            <person name="Wahlestedt C."/>
            <person name="Mattick J.S."/>
            <person name="Hume D.A."/>
            <person name="Kai C."/>
            <person name="Sasaki D."/>
            <person name="Tomaru Y."/>
            <person name="Fukuda S."/>
            <person name="Kanamori-Katayama M."/>
            <person name="Suzuki M."/>
            <person name="Aoki J."/>
            <person name="Arakawa T."/>
            <person name="Iida J."/>
            <person name="Imamura K."/>
            <person name="Itoh M."/>
            <person name="Kato T."/>
            <person name="Kawaji H."/>
            <person name="Kawagashira N."/>
            <person name="Kawashima T."/>
            <person name="Kojima M."/>
            <person name="Kondo S."/>
            <person name="Konno H."/>
            <person name="Nakano K."/>
            <person name="Ninomiya N."/>
            <person name="Nishio T."/>
            <person name="Okada M."/>
            <person name="Plessy C."/>
            <person name="Shibata K."/>
            <person name="Shiraki T."/>
            <person name="Suzuki S."/>
            <person name="Tagami M."/>
            <person name="Waki K."/>
            <person name="Watahiki A."/>
            <person name="Okamura-Oho Y."/>
            <person name="Suzuki H."/>
            <person name="Kawai J."/>
            <person name="Hayashizaki Y."/>
        </authorList>
    </citation>
    <scope>NUCLEOTIDE SEQUENCE [LARGE SCALE MRNA] (ISOFORM 1)</scope>
    <source>
        <strain>NOD</strain>
        <tissue>Thymus</tissue>
    </source>
</reference>
<reference key="3">
    <citation type="journal article" date="2004" name="Genome Res.">
        <title>The status, quality, and expansion of the NIH full-length cDNA project: the Mammalian Gene Collection (MGC).</title>
        <authorList>
            <consortium name="The MGC Project Team"/>
        </authorList>
    </citation>
    <scope>NUCLEOTIDE SEQUENCE [LARGE SCALE MRNA] (ISOFORM 1)</scope>
    <source>
        <strain>Czech II</strain>
        <tissue>Mammary tumor</tissue>
    </source>
</reference>
<reference key="4">
    <citation type="journal article" date="2010" name="Cell">
        <title>A tissue-specific atlas of mouse protein phosphorylation and expression.</title>
        <authorList>
            <person name="Huttlin E.L."/>
            <person name="Jedrychowski M.P."/>
            <person name="Elias J.E."/>
            <person name="Goswami T."/>
            <person name="Rad R."/>
            <person name="Beausoleil S.A."/>
            <person name="Villen J."/>
            <person name="Haas W."/>
            <person name="Sowa M.E."/>
            <person name="Gygi S.P."/>
        </authorList>
    </citation>
    <scope>IDENTIFICATION BY MASS SPECTROMETRY [LARGE SCALE ANALYSIS]</scope>
    <source>
        <tissue>Brain</tissue>
        <tissue>Heart</tissue>
        <tissue>Kidney</tissue>
        <tissue>Liver</tissue>
        <tissue>Lung</tissue>
        <tissue>Pancreas</tissue>
        <tissue>Spleen</tissue>
        <tissue>Testis</tissue>
    </source>
</reference>